<sequence>MSGTTETQLRDLLSSMHLRHRFLGVFDKSFPGFLDPHVPASAIVNTGSRASGGMHWIGFAFDPAAGRCYMFDPFGWSDQKLWELYRVKYNAFMRRTGLRQPDRCFTLVRSTEAVQCPCSAACGLFSALFIVSFDRYRSKPMDGNPVIDTVVGVKHENMNSPPYRDILHRNQERTYYWWTKNSAYFRAHQEELRRETALNALPENHV</sequence>
<feature type="chain" id="PRO_0000218043" description="Protease">
    <location>
        <begin position="1"/>
        <end position="206"/>
    </location>
</feature>
<feature type="active site" evidence="1">
    <location>
        <position position="55"/>
    </location>
</feature>
<feature type="active site" evidence="1">
    <location>
        <position position="72"/>
    </location>
</feature>
<feature type="active site" evidence="1">
    <location>
        <position position="122"/>
    </location>
</feature>
<feature type="site" description="Cleavage; by autolysis" evidence="1">
    <location>
        <begin position="52"/>
        <end position="53"/>
    </location>
</feature>
<feature type="disulfide bond" description="Interchain (with C-10 in cleaved protease cofactor pVI-C)" evidence="1">
    <location>
        <position position="104"/>
    </location>
</feature>
<evidence type="ECO:0000255" key="1">
    <source>
        <dbReference type="HAMAP-Rule" id="MF_04059"/>
    </source>
</evidence>
<reference key="1">
    <citation type="journal article" date="1993" name="Virology">
        <title>Organization of the avian adenovirus genome and the structure of its endopeptidase.</title>
        <authorList>
            <person name="Cai F."/>
            <person name="Weber J.M."/>
        </authorList>
    </citation>
    <scope>NUCLEOTIDE SEQUENCE [GENOMIC DNA]</scope>
</reference>
<reference key="2">
    <citation type="journal article" date="1996" name="J. Virol.">
        <title>The complete DNA sequence and genomic organization of the avian adenovirus CELO.</title>
        <authorList>
            <person name="Chiocca S."/>
            <person name="Kurzbauer R."/>
            <person name="Schaffner G."/>
            <person name="Baker A."/>
            <person name="Mautner V."/>
            <person name="Cotten M."/>
        </authorList>
    </citation>
    <scope>NUCLEOTIDE SEQUENCE [LARGE SCALE GENOMIC DNA]</scope>
</reference>
<protein>
    <recommendedName>
        <fullName evidence="1">Protease</fullName>
        <ecNumber evidence="1">3.4.22.39</ecNumber>
    </recommendedName>
    <alternativeName>
        <fullName evidence="1">Adenain</fullName>
    </alternativeName>
    <alternativeName>
        <fullName evidence="1">Adenovirus protease</fullName>
        <shortName evidence="1">AVP</shortName>
    </alternativeName>
    <alternativeName>
        <fullName evidence="1">Adenovirus proteinase</fullName>
    </alternativeName>
    <alternativeName>
        <fullName evidence="1">Endoprotease</fullName>
    </alternativeName>
</protein>
<organism>
    <name type="scientific">Fowl adenovirus A serotype 1 (strain CELO / Phelps)</name>
    <name type="common">FAdV-1</name>
    <name type="synonym">Avian adenovirus gal1 (strain Phelps)</name>
    <dbReference type="NCBI Taxonomy" id="10553"/>
    <lineage>
        <taxon>Viruses</taxon>
        <taxon>Varidnaviria</taxon>
        <taxon>Bamfordvirae</taxon>
        <taxon>Preplasmiviricota</taxon>
        <taxon>Tectiliviricetes</taxon>
        <taxon>Rowavirales</taxon>
        <taxon>Adenoviridae</taxon>
        <taxon>Aviadenovirus</taxon>
        <taxon>Fowl aviadenovirus A</taxon>
    </lineage>
</organism>
<gene>
    <name evidence="1" type="primary">L3</name>
</gene>
<comment type="function">
    <text evidence="1">Cleaves viral precursor proteins (pTP, pIIIa, pVI, pVII, pVIII, and pX) inside newly assembled particles giving rise to mature virions. Protease complexed to its cofactor slides along the viral DNA to specifically locate and cleave the viral precursors. Mature virions have a weakened organization compared to the unmature virions, thereby facilitating subsequent uncoating. Without maturation, the particle lacks infectivity and is unable to uncoat. Late in adenovirus infection, in the cytoplasm, may participate in the cytoskeleton destruction. Cleaves host cell cytoskeletal keratins K7 and K18.</text>
</comment>
<comment type="catalytic activity">
    <reaction evidence="1">
        <text>Cleaves proteins of the adenovirus and its host cell at two consensus sites: -Yaa-Xaa-Gly-Gly-|-Xaa- and -Yaa-Xaa-Gly-Xaa-|-Gly- (in which Yaa is Met, Ile or Leu, and Xaa is any amino acid).</text>
        <dbReference type="EC" id="3.4.22.39"/>
    </reaction>
</comment>
<comment type="activity regulation">
    <text evidence="1">Requires DNA and protease cofactor for maximal activation. Inside nascent virions, becomes partially activated by binding to the viral DNA, allowing it to cleave the cofactor that binds to the protease and fully activates it. Actin, like the viral protease cofactor, seems to act as a cofactor in the cleavage of cytokeratin 18 and of actin itself.</text>
</comment>
<comment type="subunit">
    <text evidence="1">Interacts with protease cofactor pVI-C; this interaction is necessary for protease activation.</text>
</comment>
<comment type="subcellular location">
    <subcellularLocation>
        <location evidence="1">Virion</location>
    </subcellularLocation>
    <subcellularLocation>
        <location evidence="1">Host nucleus</location>
    </subcellularLocation>
    <text evidence="1">Present in about 10 copies per virion.</text>
</comment>
<comment type="induction">
    <text evidence="1">Expressed in the late phase of the viral replicative cycle.</text>
</comment>
<comment type="miscellaneous">
    <text evidence="1">All late proteins expressed from the major late promoter are produced by alternative splicing and alternative polyadenylation of the same gene giving rise to non-overlapping ORFs. A leader sequence is present in the N-terminus of all these mRNAs and is recognized by the viral shutoff protein to provide expression although conventional translation via ribosome scanning from the cap has been shut off in the host cell.</text>
</comment>
<comment type="similarity">
    <text evidence="1">Belongs to the peptidase C5 family.</text>
</comment>
<proteinExistence type="inferred from homology"/>
<name>PRO_ADEG1</name>
<organismHost>
    <name type="scientific">Galliformes</name>
    <dbReference type="NCBI Taxonomy" id="8976"/>
</organismHost>
<dbReference type="EC" id="3.4.22.39" evidence="1"/>
<dbReference type="EMBL" id="L13161">
    <property type="protein sequence ID" value="AAA51402.1"/>
    <property type="molecule type" value="Genomic_DNA"/>
</dbReference>
<dbReference type="EMBL" id="U46933">
    <property type="protein sequence ID" value="AAC54913.1"/>
    <property type="molecule type" value="Genomic_DNA"/>
</dbReference>
<dbReference type="RefSeq" id="NP_043887.1">
    <property type="nucleotide sequence ID" value="NC_001720.1"/>
</dbReference>
<dbReference type="SMR" id="P42672"/>
<dbReference type="MEROPS" id="C05.001"/>
<dbReference type="GeneID" id="1476562"/>
<dbReference type="Proteomes" id="UP000001594">
    <property type="component" value="Segment"/>
</dbReference>
<dbReference type="GO" id="GO:0042025">
    <property type="term" value="C:host cell nucleus"/>
    <property type="evidence" value="ECO:0007669"/>
    <property type="project" value="UniProtKB-SubCell"/>
</dbReference>
<dbReference type="GO" id="GO:0044423">
    <property type="term" value="C:virion component"/>
    <property type="evidence" value="ECO:0007669"/>
    <property type="project" value="UniProtKB-UniRule"/>
</dbReference>
<dbReference type="GO" id="GO:0004197">
    <property type="term" value="F:cysteine-type endopeptidase activity"/>
    <property type="evidence" value="ECO:0007669"/>
    <property type="project" value="UniProtKB-UniRule"/>
</dbReference>
<dbReference type="GO" id="GO:0003677">
    <property type="term" value="F:DNA binding"/>
    <property type="evidence" value="ECO:0007669"/>
    <property type="project" value="UniProtKB-UniRule"/>
</dbReference>
<dbReference type="GO" id="GO:0006508">
    <property type="term" value="P:proteolysis"/>
    <property type="evidence" value="ECO:0007669"/>
    <property type="project" value="UniProtKB-KW"/>
</dbReference>
<dbReference type="Gene3D" id="3.40.395.10">
    <property type="entry name" value="Adenoviral Proteinase, Chain A"/>
    <property type="match status" value="1"/>
</dbReference>
<dbReference type="HAMAP" id="MF_04059">
    <property type="entry name" value="ADV_PRO"/>
    <property type="match status" value="1"/>
</dbReference>
<dbReference type="InterPro" id="IPR038765">
    <property type="entry name" value="Papain-like_cys_pep_sf"/>
</dbReference>
<dbReference type="InterPro" id="IPR000855">
    <property type="entry name" value="Peptidase_C5"/>
</dbReference>
<dbReference type="Pfam" id="PF00770">
    <property type="entry name" value="Peptidase_C5"/>
    <property type="match status" value="1"/>
</dbReference>
<dbReference type="PIRSF" id="PIRSF001218">
    <property type="entry name" value="Protease_ADV"/>
    <property type="match status" value="1"/>
</dbReference>
<dbReference type="PRINTS" id="PR00703">
    <property type="entry name" value="ADVENDOPTASE"/>
</dbReference>
<dbReference type="SUPFAM" id="SSF54001">
    <property type="entry name" value="Cysteine proteinases"/>
    <property type="match status" value="1"/>
</dbReference>
<accession>P42672</accession>
<keyword id="KW-0068">Autocatalytic cleavage</keyword>
<keyword id="KW-1015">Disulfide bond</keyword>
<keyword id="KW-0238">DNA-binding</keyword>
<keyword id="KW-1048">Host nucleus</keyword>
<keyword id="KW-0378">Hydrolase</keyword>
<keyword id="KW-0426">Late protein</keyword>
<keyword id="KW-0645">Protease</keyword>
<keyword id="KW-1185">Reference proteome</keyword>
<keyword id="KW-0788">Thiol protease</keyword>
<keyword id="KW-0946">Virion</keyword>